<dbReference type="EC" id="1.1.5.4" evidence="1"/>
<dbReference type="EMBL" id="BA000017">
    <property type="protein sequence ID" value="BAB58769.1"/>
    <property type="molecule type" value="Genomic_DNA"/>
</dbReference>
<dbReference type="SMR" id="P65424"/>
<dbReference type="KEGG" id="sav:SAV2607"/>
<dbReference type="HOGENOM" id="CLU_028151_0_0_9"/>
<dbReference type="PhylomeDB" id="P65424"/>
<dbReference type="UniPathway" id="UPA00223">
    <property type="reaction ID" value="UER01008"/>
</dbReference>
<dbReference type="Proteomes" id="UP000002481">
    <property type="component" value="Chromosome"/>
</dbReference>
<dbReference type="GO" id="GO:0047545">
    <property type="term" value="F:2-hydroxyglutarate dehydrogenase activity"/>
    <property type="evidence" value="ECO:0007669"/>
    <property type="project" value="TreeGrafter"/>
</dbReference>
<dbReference type="GO" id="GO:0008924">
    <property type="term" value="F:L-malate dehydrogenase (quinone) activity"/>
    <property type="evidence" value="ECO:0007669"/>
    <property type="project" value="UniProtKB-UniRule"/>
</dbReference>
<dbReference type="GO" id="GO:0006099">
    <property type="term" value="P:tricarboxylic acid cycle"/>
    <property type="evidence" value="ECO:0007669"/>
    <property type="project" value="UniProtKB-UniRule"/>
</dbReference>
<dbReference type="Gene3D" id="3.30.9.10">
    <property type="entry name" value="D-Amino Acid Oxidase, subunit A, domain 2"/>
    <property type="match status" value="1"/>
</dbReference>
<dbReference type="Gene3D" id="3.50.50.60">
    <property type="entry name" value="FAD/NAD(P)-binding domain"/>
    <property type="match status" value="1"/>
</dbReference>
<dbReference type="HAMAP" id="MF_00212">
    <property type="entry name" value="MQO"/>
    <property type="match status" value="1"/>
</dbReference>
<dbReference type="InterPro" id="IPR036188">
    <property type="entry name" value="FAD/NAD-bd_sf"/>
</dbReference>
<dbReference type="InterPro" id="IPR006231">
    <property type="entry name" value="MQO"/>
</dbReference>
<dbReference type="NCBIfam" id="NF040844">
    <property type="entry name" value="Lac_Quin_Ox_NO"/>
    <property type="match status" value="1"/>
</dbReference>
<dbReference type="NCBIfam" id="TIGR01320">
    <property type="entry name" value="mal_quin_oxido"/>
    <property type="match status" value="1"/>
</dbReference>
<dbReference type="NCBIfam" id="NF003606">
    <property type="entry name" value="PRK05257.2-1"/>
    <property type="match status" value="1"/>
</dbReference>
<dbReference type="NCBIfam" id="NF003611">
    <property type="entry name" value="PRK05257.3-2"/>
    <property type="match status" value="1"/>
</dbReference>
<dbReference type="NCBIfam" id="NF009875">
    <property type="entry name" value="PRK13339.1"/>
    <property type="match status" value="1"/>
</dbReference>
<dbReference type="PANTHER" id="PTHR43104">
    <property type="entry name" value="L-2-HYDROXYGLUTARATE DEHYDROGENASE, MITOCHONDRIAL"/>
    <property type="match status" value="1"/>
</dbReference>
<dbReference type="PANTHER" id="PTHR43104:SF2">
    <property type="entry name" value="L-2-HYDROXYGLUTARATE DEHYDROGENASE, MITOCHONDRIAL"/>
    <property type="match status" value="1"/>
</dbReference>
<dbReference type="Pfam" id="PF06039">
    <property type="entry name" value="Mqo"/>
    <property type="match status" value="1"/>
</dbReference>
<dbReference type="SUPFAM" id="SSF51905">
    <property type="entry name" value="FAD/NAD(P)-binding domain"/>
    <property type="match status" value="1"/>
</dbReference>
<protein>
    <recommendedName>
        <fullName evidence="1">Probable malate:quinone oxidoreductase 2</fullName>
        <ecNumber evidence="1">1.1.5.4</ecNumber>
    </recommendedName>
    <alternativeName>
        <fullName evidence="1">MQO 2</fullName>
    </alternativeName>
    <alternativeName>
        <fullName evidence="1">Malate dehydrogenase [quinone] 2</fullName>
    </alternativeName>
</protein>
<comment type="catalytic activity">
    <reaction evidence="1">
        <text>(S)-malate + a quinone = a quinol + oxaloacetate</text>
        <dbReference type="Rhea" id="RHEA:46012"/>
        <dbReference type="ChEBI" id="CHEBI:15589"/>
        <dbReference type="ChEBI" id="CHEBI:16452"/>
        <dbReference type="ChEBI" id="CHEBI:24646"/>
        <dbReference type="ChEBI" id="CHEBI:132124"/>
        <dbReference type="EC" id="1.1.5.4"/>
    </reaction>
</comment>
<comment type="cofactor">
    <cofactor evidence="1">
        <name>FAD</name>
        <dbReference type="ChEBI" id="CHEBI:57692"/>
    </cofactor>
</comment>
<comment type="pathway">
    <text evidence="1">Carbohydrate metabolism; tricarboxylic acid cycle; oxaloacetate from (S)-malate (quinone route): step 1/1.</text>
</comment>
<comment type="similarity">
    <text evidence="1">Belongs to the MQO family.</text>
</comment>
<organism>
    <name type="scientific">Staphylococcus aureus (strain Mu50 / ATCC 700699)</name>
    <dbReference type="NCBI Taxonomy" id="158878"/>
    <lineage>
        <taxon>Bacteria</taxon>
        <taxon>Bacillati</taxon>
        <taxon>Bacillota</taxon>
        <taxon>Bacilli</taxon>
        <taxon>Bacillales</taxon>
        <taxon>Staphylococcaceae</taxon>
        <taxon>Staphylococcus</taxon>
    </lineage>
</organism>
<accession>P65424</accession>
<accession>Q99R30</accession>
<evidence type="ECO:0000255" key="1">
    <source>
        <dbReference type="HAMAP-Rule" id="MF_00212"/>
    </source>
</evidence>
<gene>
    <name evidence="1" type="primary">mqo2</name>
    <name type="ordered locus">SAV2607</name>
</gene>
<reference key="1">
    <citation type="journal article" date="2001" name="Lancet">
        <title>Whole genome sequencing of meticillin-resistant Staphylococcus aureus.</title>
        <authorList>
            <person name="Kuroda M."/>
            <person name="Ohta T."/>
            <person name="Uchiyama I."/>
            <person name="Baba T."/>
            <person name="Yuzawa H."/>
            <person name="Kobayashi I."/>
            <person name="Cui L."/>
            <person name="Oguchi A."/>
            <person name="Aoki K."/>
            <person name="Nagai Y."/>
            <person name="Lian J.-Q."/>
            <person name="Ito T."/>
            <person name="Kanamori M."/>
            <person name="Matsumaru H."/>
            <person name="Maruyama A."/>
            <person name="Murakami H."/>
            <person name="Hosoyama A."/>
            <person name="Mizutani-Ui Y."/>
            <person name="Takahashi N.K."/>
            <person name="Sawano T."/>
            <person name="Inoue R."/>
            <person name="Kaito C."/>
            <person name="Sekimizu K."/>
            <person name="Hirakawa H."/>
            <person name="Kuhara S."/>
            <person name="Goto S."/>
            <person name="Yabuzaki J."/>
            <person name="Kanehisa M."/>
            <person name="Yamashita A."/>
            <person name="Oshima K."/>
            <person name="Furuya K."/>
            <person name="Yoshino C."/>
            <person name="Shiba T."/>
            <person name="Hattori M."/>
            <person name="Ogasawara N."/>
            <person name="Hayashi H."/>
            <person name="Hiramatsu K."/>
        </authorList>
    </citation>
    <scope>NUCLEOTIDE SEQUENCE [LARGE SCALE GENOMIC DNA]</scope>
    <source>
        <strain>Mu50 / ATCC 700699</strain>
    </source>
</reference>
<sequence>MAKSNSKDIVLIGAGVLSTTFGSMLKEIEPDWNIHVYERLDRPAIESSNERNNAGTGHAALCELNYTVLQPDGSIDIEKAKVINEEFEISKQFWGHLVKSGSIENPREFINPLPHISYVRGKNNVKFLKDRYEAMKAFPMFDNIEYTEDIEVMKKWIPLMMKGREDNPGIMAASKIDEGTDVNFGELTRKMAKSIEAHPNATVQFNHEVVDFEQLSNGQWEVTVKNRLTGEKFKQVTDYVFIGAGGGAIPLLQKTGIPESKHLGGFPISGQFLACTNPQVIEQHDAKVYGKEPPGTPPMTVPHLDTRYIDGQRTLLFGPFANVGPKFLKNGSNLDLFKSVKTYNITTLLAAAVKNLPLIKYSFDQVIMTKEGCMNHLRTFYPEARNEDWQLYTAGKRVQVIKDTPEHGKGFIQFGTEVVNSQDHTVIALLGESPGASTSVSVALEVLERNFPEYKTEWAPKIKKMIPSYGESLIEDEKLMRKIRKQTSKDLELGYYEN</sequence>
<feature type="chain" id="PRO_0000128740" description="Probable malate:quinone oxidoreductase 2">
    <location>
        <begin position="1"/>
        <end position="498"/>
    </location>
</feature>
<name>MQO2_STAAM</name>
<proteinExistence type="inferred from homology"/>
<keyword id="KW-0274">FAD</keyword>
<keyword id="KW-0285">Flavoprotein</keyword>
<keyword id="KW-0560">Oxidoreductase</keyword>
<keyword id="KW-0816">Tricarboxylic acid cycle</keyword>